<feature type="chain" id="PRO_1000190589" description="Imidazole glycerol phosphate synthase subunit HisF">
    <location>
        <begin position="1"/>
        <end position="252"/>
    </location>
</feature>
<feature type="active site" evidence="1">
    <location>
        <position position="11"/>
    </location>
</feature>
<feature type="active site" evidence="1">
    <location>
        <position position="130"/>
    </location>
</feature>
<reference key="1">
    <citation type="journal article" date="2013" name="Proc. Natl. Acad. Sci. U.S.A.">
        <title>Polynucleobacter necessarius, a model for genome reduction in both free-living and symbiotic bacteria.</title>
        <authorList>
            <person name="Boscaro V."/>
            <person name="Felletti M."/>
            <person name="Vannini C."/>
            <person name="Ackerman M.S."/>
            <person name="Chain P.S."/>
            <person name="Malfatti S."/>
            <person name="Vergez L.M."/>
            <person name="Shin M."/>
            <person name="Doak T.G."/>
            <person name="Lynch M."/>
            <person name="Petroni G."/>
        </authorList>
    </citation>
    <scope>NUCLEOTIDE SEQUENCE [LARGE SCALE GENOMIC DNA]</scope>
    <source>
        <strain>STIR1</strain>
    </source>
</reference>
<comment type="function">
    <text evidence="1">IGPS catalyzes the conversion of PRFAR and glutamine to IGP, AICAR and glutamate. The HisF subunit catalyzes the cyclization activity that produces IGP and AICAR from PRFAR using the ammonia provided by the HisH subunit.</text>
</comment>
<comment type="catalytic activity">
    <reaction evidence="1">
        <text>5-[(5-phospho-1-deoxy-D-ribulos-1-ylimino)methylamino]-1-(5-phospho-beta-D-ribosyl)imidazole-4-carboxamide + L-glutamine = D-erythro-1-(imidazol-4-yl)glycerol 3-phosphate + 5-amino-1-(5-phospho-beta-D-ribosyl)imidazole-4-carboxamide + L-glutamate + H(+)</text>
        <dbReference type="Rhea" id="RHEA:24793"/>
        <dbReference type="ChEBI" id="CHEBI:15378"/>
        <dbReference type="ChEBI" id="CHEBI:29985"/>
        <dbReference type="ChEBI" id="CHEBI:58278"/>
        <dbReference type="ChEBI" id="CHEBI:58359"/>
        <dbReference type="ChEBI" id="CHEBI:58475"/>
        <dbReference type="ChEBI" id="CHEBI:58525"/>
        <dbReference type="EC" id="4.3.2.10"/>
    </reaction>
</comment>
<comment type="pathway">
    <text evidence="1">Amino-acid biosynthesis; L-histidine biosynthesis; L-histidine from 5-phospho-alpha-D-ribose 1-diphosphate: step 5/9.</text>
</comment>
<comment type="subunit">
    <text evidence="1">Heterodimer of HisH and HisF.</text>
</comment>
<comment type="subcellular location">
    <subcellularLocation>
        <location evidence="1">Cytoplasm</location>
    </subcellularLocation>
</comment>
<comment type="similarity">
    <text evidence="1">Belongs to the HisA/HisF family.</text>
</comment>
<proteinExistence type="inferred from homology"/>
<organism>
    <name type="scientific">Polynucleobacter necessarius subsp. necessarius (strain STIR1)</name>
    <dbReference type="NCBI Taxonomy" id="452638"/>
    <lineage>
        <taxon>Bacteria</taxon>
        <taxon>Pseudomonadati</taxon>
        <taxon>Pseudomonadota</taxon>
        <taxon>Betaproteobacteria</taxon>
        <taxon>Burkholderiales</taxon>
        <taxon>Burkholderiaceae</taxon>
        <taxon>Polynucleobacter</taxon>
    </lineage>
</organism>
<keyword id="KW-0028">Amino-acid biosynthesis</keyword>
<keyword id="KW-0963">Cytoplasm</keyword>
<keyword id="KW-0368">Histidine biosynthesis</keyword>
<keyword id="KW-0456">Lyase</keyword>
<evidence type="ECO:0000255" key="1">
    <source>
        <dbReference type="HAMAP-Rule" id="MF_01013"/>
    </source>
</evidence>
<sequence>MLTKRIIPCLDVTAGRVVKGVNFVGLRDAGDPVEIAKRYDTQGADELTFLDITATSDGRDLILHIIEDVASQVFIPLTVGGGVRTVADVRRLLNAGADKVSMNSSAVANPDLVSDAAAYYGSQCIVVAIDAKQTEAGNWEVFTHGGRTATGMDVVEWAKEVAKRGAGEILLTSINRDGSKDGFDLALTAAVSDAVSLPVIASGGVGNLQHLVDGITKGHADAVLAASICHYSEYTVGQAKEYMAAQGIPVRI</sequence>
<gene>
    <name evidence="1" type="primary">hisF</name>
    <name type="ordered locus">Pnec_0111</name>
</gene>
<name>HIS6_POLNS</name>
<protein>
    <recommendedName>
        <fullName evidence="1">Imidazole glycerol phosphate synthase subunit HisF</fullName>
        <ecNumber evidence="1">4.3.2.10</ecNumber>
    </recommendedName>
    <alternativeName>
        <fullName evidence="1">IGP synthase cyclase subunit</fullName>
    </alternativeName>
    <alternativeName>
        <fullName evidence="1">IGP synthase subunit HisF</fullName>
    </alternativeName>
    <alternativeName>
        <fullName evidence="1">ImGP synthase subunit HisF</fullName>
        <shortName evidence="1">IGPS subunit HisF</shortName>
    </alternativeName>
</protein>
<dbReference type="EC" id="4.3.2.10" evidence="1"/>
<dbReference type="EMBL" id="CP001010">
    <property type="protein sequence ID" value="ACB43430.1"/>
    <property type="molecule type" value="Genomic_DNA"/>
</dbReference>
<dbReference type="SMR" id="B1XSV3"/>
<dbReference type="STRING" id="452638.Pnec_0111"/>
<dbReference type="KEGG" id="pne:Pnec_0111"/>
<dbReference type="eggNOG" id="COG0107">
    <property type="taxonomic scope" value="Bacteria"/>
</dbReference>
<dbReference type="HOGENOM" id="CLU_048577_4_0_4"/>
<dbReference type="OrthoDB" id="9781903at2"/>
<dbReference type="UniPathway" id="UPA00031">
    <property type="reaction ID" value="UER00010"/>
</dbReference>
<dbReference type="GO" id="GO:0005737">
    <property type="term" value="C:cytoplasm"/>
    <property type="evidence" value="ECO:0007669"/>
    <property type="project" value="UniProtKB-SubCell"/>
</dbReference>
<dbReference type="GO" id="GO:0000107">
    <property type="term" value="F:imidazoleglycerol-phosphate synthase activity"/>
    <property type="evidence" value="ECO:0007669"/>
    <property type="project" value="UniProtKB-UniRule"/>
</dbReference>
<dbReference type="GO" id="GO:0016829">
    <property type="term" value="F:lyase activity"/>
    <property type="evidence" value="ECO:0007669"/>
    <property type="project" value="UniProtKB-KW"/>
</dbReference>
<dbReference type="GO" id="GO:0000105">
    <property type="term" value="P:L-histidine biosynthetic process"/>
    <property type="evidence" value="ECO:0007669"/>
    <property type="project" value="UniProtKB-UniRule"/>
</dbReference>
<dbReference type="CDD" id="cd04731">
    <property type="entry name" value="HisF"/>
    <property type="match status" value="1"/>
</dbReference>
<dbReference type="FunFam" id="3.20.20.70:FF:000006">
    <property type="entry name" value="Imidazole glycerol phosphate synthase subunit HisF"/>
    <property type="match status" value="1"/>
</dbReference>
<dbReference type="Gene3D" id="3.20.20.70">
    <property type="entry name" value="Aldolase class I"/>
    <property type="match status" value="1"/>
</dbReference>
<dbReference type="HAMAP" id="MF_01013">
    <property type="entry name" value="HisF"/>
    <property type="match status" value="1"/>
</dbReference>
<dbReference type="InterPro" id="IPR013785">
    <property type="entry name" value="Aldolase_TIM"/>
</dbReference>
<dbReference type="InterPro" id="IPR006062">
    <property type="entry name" value="His_biosynth"/>
</dbReference>
<dbReference type="InterPro" id="IPR004651">
    <property type="entry name" value="HisF"/>
</dbReference>
<dbReference type="InterPro" id="IPR050064">
    <property type="entry name" value="IGPS_HisA/HisF"/>
</dbReference>
<dbReference type="InterPro" id="IPR011060">
    <property type="entry name" value="RibuloseP-bd_barrel"/>
</dbReference>
<dbReference type="NCBIfam" id="TIGR00735">
    <property type="entry name" value="hisF"/>
    <property type="match status" value="1"/>
</dbReference>
<dbReference type="PANTHER" id="PTHR21235:SF2">
    <property type="entry name" value="IMIDAZOLE GLYCEROL PHOSPHATE SYNTHASE HISHF"/>
    <property type="match status" value="1"/>
</dbReference>
<dbReference type="PANTHER" id="PTHR21235">
    <property type="entry name" value="IMIDAZOLE GLYCEROL PHOSPHATE SYNTHASE SUBUNIT HISF/H IGP SYNTHASE SUBUNIT HISF/H"/>
    <property type="match status" value="1"/>
</dbReference>
<dbReference type="Pfam" id="PF00977">
    <property type="entry name" value="His_biosynth"/>
    <property type="match status" value="1"/>
</dbReference>
<dbReference type="SUPFAM" id="SSF51366">
    <property type="entry name" value="Ribulose-phoshate binding barrel"/>
    <property type="match status" value="1"/>
</dbReference>
<accession>B1XSV3</accession>